<organism>
    <name type="scientific">Bos taurus</name>
    <name type="common">Bovine</name>
    <dbReference type="NCBI Taxonomy" id="9913"/>
    <lineage>
        <taxon>Eukaryota</taxon>
        <taxon>Metazoa</taxon>
        <taxon>Chordata</taxon>
        <taxon>Craniata</taxon>
        <taxon>Vertebrata</taxon>
        <taxon>Euteleostomi</taxon>
        <taxon>Mammalia</taxon>
        <taxon>Eutheria</taxon>
        <taxon>Laurasiatheria</taxon>
        <taxon>Artiodactyla</taxon>
        <taxon>Ruminantia</taxon>
        <taxon>Pecora</taxon>
        <taxon>Bovidae</taxon>
        <taxon>Bovinae</taxon>
        <taxon>Bos</taxon>
    </lineage>
</organism>
<keyword id="KW-0175">Coiled coil</keyword>
<keyword id="KW-0963">Cytoplasm</keyword>
<keyword id="KW-1015">Disulfide bond</keyword>
<keyword id="KW-0403">Intermediate filament</keyword>
<keyword id="KW-0416">Keratin</keyword>
<keyword id="KW-0597">Phosphoprotein</keyword>
<keyword id="KW-1185">Reference proteome</keyword>
<keyword id="KW-0964">Secreted</keyword>
<proteinExistence type="inferred from homology"/>
<accession>P06394</accession>
<comment type="function">
    <text evidence="1">Plays a role in the establishment of the epidermal barrier on plantar skin (By similarity). Involved in the maintenance of cell layer development and keratin filament bundles in suprabasal cells of the epithelium (By similarity).</text>
</comment>
<comment type="subunit">
    <text evidence="1 2">Heterotetramer of two type I and two type II keratins. Heterodimer with KRT1 (By similarity). Two heterodimers of KRT1 and KRT10 form a heterotetramer (By similarity). The KRT10 subunit in the heterotetramer is probably disulfide-linked (By similarity).</text>
</comment>
<comment type="subcellular location">
    <subcellularLocation>
        <location evidence="2">Secreted</location>
        <location evidence="2">Extracellular space</location>
    </subcellularLocation>
    <subcellularLocation>
        <location evidence="2">Cell surface</location>
    </subcellularLocation>
    <subcellularLocation>
        <location evidence="1">Cytoplasm</location>
    </subcellularLocation>
</comment>
<comment type="miscellaneous">
    <text>There are two types of cytoskeletal and microfibrillar keratin: I (acidic; 40-55 kDa) and II (neutral to basic; 56-70 kDa).</text>
</comment>
<comment type="similarity">
    <text evidence="3">Belongs to the intermediate filament family.</text>
</comment>
<evidence type="ECO:0000250" key="1">
    <source>
        <dbReference type="UniProtKB" id="P02535"/>
    </source>
</evidence>
<evidence type="ECO:0000250" key="2">
    <source>
        <dbReference type="UniProtKB" id="P13645"/>
    </source>
</evidence>
<evidence type="ECO:0000255" key="3">
    <source>
        <dbReference type="PROSITE-ProRule" id="PRU01188"/>
    </source>
</evidence>
<evidence type="ECO:0000256" key="4">
    <source>
        <dbReference type="SAM" id="MobiDB-lite"/>
    </source>
</evidence>
<evidence type="ECO:0000305" key="5"/>
<reference key="1">
    <citation type="journal article" date="1985" name="EMBO J.">
        <title>Complete sequence of a bovine type I cytokeratin gene: conserved and variable intron positions in genes of polypeptides of the same cytokeratin subfamily.</title>
        <authorList>
            <person name="Rieger M."/>
            <person name="Jorcano J.L."/>
            <person name="Franke W.W."/>
        </authorList>
    </citation>
    <scope>NUCLEOTIDE SEQUENCE [GENOMIC DNA]</scope>
</reference>
<reference key="2">
    <citation type="journal article" date="1984" name="J. Mol. Biol.">
        <title>Identification of two types of keratin polypeptides within the acidic cytokeratin subfamily I.</title>
        <authorList>
            <person name="Jorcano J.L."/>
            <person name="Rieger M."/>
            <person name="Franz J.K."/>
            <person name="Schiller D.L."/>
            <person name="Moll R."/>
            <person name="Franke W.W."/>
        </authorList>
    </citation>
    <scope>NUCLEOTIDE SEQUENCE [GENOMIC DNA] OF 281-526</scope>
    <source>
        <tissue>Epidermis</tissue>
    </source>
</reference>
<feature type="chain" id="PRO_0000063641" description="Keratin, type I cytoskeletal 10">
    <location>
        <begin position="1"/>
        <end position="526"/>
    </location>
</feature>
<feature type="domain" description="IF rod" evidence="3">
    <location>
        <begin position="127"/>
        <end position="441"/>
    </location>
</feature>
<feature type="region of interest" description="Head">
    <location>
        <begin position="1"/>
        <end position="126"/>
    </location>
</feature>
<feature type="region of interest" description="Disordered" evidence="4">
    <location>
        <begin position="1"/>
        <end position="29"/>
    </location>
</feature>
<feature type="region of interest" description="Coil 1A">
    <location>
        <begin position="127"/>
        <end position="162"/>
    </location>
</feature>
<feature type="region of interest" description="Linker 1">
    <location>
        <begin position="163"/>
        <end position="183"/>
    </location>
</feature>
<feature type="region of interest" description="Coil 1B">
    <location>
        <begin position="184"/>
        <end position="275"/>
    </location>
</feature>
<feature type="region of interest" description="Linker 12">
    <location>
        <begin position="276"/>
        <end position="298"/>
    </location>
</feature>
<feature type="region of interest" description="Coil 2">
    <location>
        <begin position="299"/>
        <end position="437"/>
    </location>
</feature>
<feature type="region of interest" description="Tail">
    <location>
        <begin position="438"/>
        <end position="526"/>
    </location>
</feature>
<feature type="region of interest" description="Disordered" evidence="4">
    <location>
        <begin position="458"/>
        <end position="526"/>
    </location>
</feature>
<feature type="compositionally biased region" description="Low complexity" evidence="4">
    <location>
        <begin position="1"/>
        <end position="15"/>
    </location>
</feature>
<feature type="compositionally biased region" description="Gly residues" evidence="4">
    <location>
        <begin position="458"/>
        <end position="505"/>
    </location>
</feature>
<feature type="compositionally biased region" description="Low complexity" evidence="4">
    <location>
        <begin position="506"/>
        <end position="526"/>
    </location>
</feature>
<feature type="site" description="Stutter">
    <location>
        <position position="379"/>
    </location>
</feature>
<feature type="modified residue" description="Phosphoserine" evidence="2">
    <location>
        <position position="14"/>
    </location>
</feature>
<feature type="modified residue" description="Phosphoserine" evidence="2">
    <location>
        <position position="16"/>
    </location>
</feature>
<feature type="modified residue" description="Phosphoserine" evidence="2">
    <location>
        <position position="34"/>
    </location>
</feature>
<feature type="modified residue" description="Phosphoserine" evidence="2">
    <location>
        <position position="45"/>
    </location>
</feature>
<feature type="modified residue" description="Phosphoserine" evidence="2">
    <location>
        <position position="48"/>
    </location>
</feature>
<feature type="modified residue" description="Phosphoserine" evidence="2">
    <location>
        <position position="151"/>
    </location>
</feature>
<feature type="disulfide bond" description="Interchain" evidence="2">
    <location>
        <position position="382"/>
    </location>
</feature>
<feature type="sequence conflict" description="In Ref. 2." evidence="5" ref="2">
    <original>SSGGYGGGSSSGGGHGGSSGGS</original>
    <variation>PAAATAAEVQRWRPRRSFRRQ</variation>
    <location>
        <begin position="467"/>
        <end position="488"/>
    </location>
</feature>
<feature type="sequence conflict" description="In Ref. 2." evidence="5" ref="2">
    <original>SSGGGHGGGS</original>
    <variation>PVAVARRRK</variation>
    <location>
        <begin position="494"/>
        <end position="503"/>
    </location>
</feature>
<gene>
    <name type="primary">KRT10</name>
</gene>
<protein>
    <recommendedName>
        <fullName>Keratin, type I cytoskeletal 10</fullName>
    </recommendedName>
    <alternativeName>
        <fullName>Cytokeratin VIB</fullName>
    </alternativeName>
    <alternativeName>
        <fullName>Cytokeratin-10</fullName>
        <shortName>CK-10</shortName>
    </alternativeName>
    <alternativeName>
        <fullName>Cytokeratin-6B</fullName>
    </alternativeName>
    <alternativeName>
        <fullName>Keratin-10</fullName>
        <shortName>K10</shortName>
    </alternativeName>
</protein>
<dbReference type="EMBL" id="X02870">
    <property type="protein sequence ID" value="CAA26626.1"/>
    <property type="molecule type" value="Genomic_DNA"/>
</dbReference>
<dbReference type="PIR" id="A02941">
    <property type="entry name" value="KRBOVI"/>
</dbReference>
<dbReference type="RefSeq" id="NP_776802.1">
    <property type="nucleotide sequence ID" value="NM_174377.1"/>
</dbReference>
<dbReference type="SMR" id="P06394"/>
<dbReference type="FunCoup" id="P06394">
    <property type="interactions" value="199"/>
</dbReference>
<dbReference type="IntAct" id="P06394">
    <property type="interactions" value="1"/>
</dbReference>
<dbReference type="STRING" id="9913.ENSBTAP00000017140"/>
<dbReference type="PaxDb" id="9913-ENSBTAP00000017140"/>
<dbReference type="PeptideAtlas" id="P06394"/>
<dbReference type="GeneID" id="281888"/>
<dbReference type="KEGG" id="bta:281888"/>
<dbReference type="CTD" id="3858"/>
<dbReference type="eggNOG" id="ENOG502QTM6">
    <property type="taxonomic scope" value="Eukaryota"/>
</dbReference>
<dbReference type="InParanoid" id="P06394"/>
<dbReference type="OrthoDB" id="2441647at2759"/>
<dbReference type="Proteomes" id="UP000009136">
    <property type="component" value="Unplaced"/>
</dbReference>
<dbReference type="GO" id="GO:0009986">
    <property type="term" value="C:cell surface"/>
    <property type="evidence" value="ECO:0007669"/>
    <property type="project" value="UniProtKB-SubCell"/>
</dbReference>
<dbReference type="GO" id="GO:0005737">
    <property type="term" value="C:cytoplasm"/>
    <property type="evidence" value="ECO:0000250"/>
    <property type="project" value="UniProtKB"/>
</dbReference>
<dbReference type="GO" id="GO:0005856">
    <property type="term" value="C:cytoskeleton"/>
    <property type="evidence" value="ECO:0000318"/>
    <property type="project" value="GO_Central"/>
</dbReference>
<dbReference type="GO" id="GO:0005576">
    <property type="term" value="C:extracellular region"/>
    <property type="evidence" value="ECO:0007669"/>
    <property type="project" value="UniProtKB-SubCell"/>
</dbReference>
<dbReference type="GO" id="GO:0045095">
    <property type="term" value="C:keratin filament"/>
    <property type="evidence" value="ECO:0000318"/>
    <property type="project" value="GO_Central"/>
</dbReference>
<dbReference type="GO" id="GO:0046982">
    <property type="term" value="F:protein heterodimerization activity"/>
    <property type="evidence" value="ECO:0000250"/>
    <property type="project" value="UniProtKB"/>
</dbReference>
<dbReference type="GO" id="GO:0030280">
    <property type="term" value="F:structural constituent of skin epidermis"/>
    <property type="evidence" value="ECO:0000318"/>
    <property type="project" value="GO_Central"/>
</dbReference>
<dbReference type="GO" id="GO:0008544">
    <property type="term" value="P:epidermis development"/>
    <property type="evidence" value="ECO:0000318"/>
    <property type="project" value="GO_Central"/>
</dbReference>
<dbReference type="GO" id="GO:0030855">
    <property type="term" value="P:epithelial cell differentiation"/>
    <property type="evidence" value="ECO:0000318"/>
    <property type="project" value="GO_Central"/>
</dbReference>
<dbReference type="GO" id="GO:0045109">
    <property type="term" value="P:intermediate filament organization"/>
    <property type="evidence" value="ECO:0000318"/>
    <property type="project" value="GO_Central"/>
</dbReference>
<dbReference type="GO" id="GO:0045684">
    <property type="term" value="P:positive regulation of epidermis development"/>
    <property type="evidence" value="ECO:0000250"/>
    <property type="project" value="UniProtKB"/>
</dbReference>
<dbReference type="GO" id="GO:0051290">
    <property type="term" value="P:protein heterotetramerization"/>
    <property type="evidence" value="ECO:0000250"/>
    <property type="project" value="UniProtKB"/>
</dbReference>
<dbReference type="FunFam" id="1.20.5.1160:FF:000002">
    <property type="entry name" value="Type I keratin 10"/>
    <property type="match status" value="1"/>
</dbReference>
<dbReference type="FunFam" id="1.20.5.170:FF:000002">
    <property type="entry name" value="Type I keratin KA11"/>
    <property type="match status" value="1"/>
</dbReference>
<dbReference type="FunFam" id="1.20.5.500:FF:000001">
    <property type="entry name" value="Type II keratin 23"/>
    <property type="match status" value="1"/>
</dbReference>
<dbReference type="Gene3D" id="1.20.5.170">
    <property type="match status" value="1"/>
</dbReference>
<dbReference type="Gene3D" id="1.20.5.500">
    <property type="entry name" value="Single helix bin"/>
    <property type="match status" value="1"/>
</dbReference>
<dbReference type="Gene3D" id="1.20.5.1160">
    <property type="entry name" value="Vasodilator-stimulated phosphoprotein"/>
    <property type="match status" value="1"/>
</dbReference>
<dbReference type="InterPro" id="IPR018039">
    <property type="entry name" value="IF_conserved"/>
</dbReference>
<dbReference type="InterPro" id="IPR039008">
    <property type="entry name" value="IF_rod_dom"/>
</dbReference>
<dbReference type="InterPro" id="IPR002957">
    <property type="entry name" value="Keratin_I"/>
</dbReference>
<dbReference type="PANTHER" id="PTHR23239">
    <property type="entry name" value="INTERMEDIATE FILAMENT"/>
    <property type="match status" value="1"/>
</dbReference>
<dbReference type="PANTHER" id="PTHR23239:SF137">
    <property type="entry name" value="KERATIN, TYPE I CYTOSKELETAL 10"/>
    <property type="match status" value="1"/>
</dbReference>
<dbReference type="Pfam" id="PF00038">
    <property type="entry name" value="Filament"/>
    <property type="match status" value="1"/>
</dbReference>
<dbReference type="PRINTS" id="PR01248">
    <property type="entry name" value="TYPE1KERATIN"/>
</dbReference>
<dbReference type="SMART" id="SM01391">
    <property type="entry name" value="Filament"/>
    <property type="match status" value="1"/>
</dbReference>
<dbReference type="SUPFAM" id="SSF64593">
    <property type="entry name" value="Intermediate filament protein, coiled coil region"/>
    <property type="match status" value="2"/>
</dbReference>
<dbReference type="PROSITE" id="PS00226">
    <property type="entry name" value="IF_ROD_1"/>
    <property type="match status" value="1"/>
</dbReference>
<dbReference type="PROSITE" id="PS51842">
    <property type="entry name" value="IF_ROD_2"/>
    <property type="match status" value="1"/>
</dbReference>
<sequence>MSVRYSSSKQYSSSRSGGGGGGGSSLRISSSKGSLGGGYSSGGFSGGSFSRGSSAGGCFGGSSSIYGGGLGSGFGGGYGSSFGGSYGGSFGGGYGGGGFGGGSFGGGSFGGGLGGGFGDGGLISGNQKITMQNLNDRLASYLDKVRALEESNYELEVKIKEWYEKYGNSRQREPRDYSKYYQTIDDLKNQIFNLTTDNANILIQVDNARLAADDFRLKYENEVTLRQSVEADINGLRRVLDELTLTKTDLEMQIESLTEELAYLKKNHEEEMRDLQNVSTGDVNVEMNAAPGVDLTELLNNMRSQYEQLAEKNRRDAEAWFNEKSKELTTEINSNLEQVSSHKSEITELRRTIQGLEIELQSQLALKQSLEASLAETEGRYCVQLSQIQSQISSLEEQLQQIRAETECQNAEYQQLLDIKIRLENEIQTYRSLLEGEGSSGGGSYGGGRGYGGSSGGGGGGYGGGSSSGGYGGGSSSGGGHGGSSGGSYGGGSSSGGGHGGGSSSGGHKSTTTGSVGESSSKGPRY</sequence>
<name>K1C10_BOVIN</name>